<keyword id="KW-0067">ATP-binding</keyword>
<keyword id="KW-0347">Helicase</keyword>
<keyword id="KW-0378">Hydrolase</keyword>
<keyword id="KW-0547">Nucleotide-binding</keyword>
<keyword id="KW-0539">Nucleus</keyword>
<keyword id="KW-1185">Reference proteome</keyword>
<keyword id="KW-0690">Ribosome biogenesis</keyword>
<keyword id="KW-0694">RNA-binding</keyword>
<keyword id="KW-0698">rRNA processing</keyword>
<comment type="function">
    <text evidence="1">ATP-dependent rRNA helicase required for pre-ribosomal RNA processing. Involved in the maturation of the 35S-pre-rRNA and to its cleavage to mature 18S rRNA.</text>
</comment>
<comment type="catalytic activity">
    <reaction evidence="1">
        <text>ATP + H2O = ADP + phosphate + H(+)</text>
        <dbReference type="Rhea" id="RHEA:13065"/>
        <dbReference type="ChEBI" id="CHEBI:15377"/>
        <dbReference type="ChEBI" id="CHEBI:15378"/>
        <dbReference type="ChEBI" id="CHEBI:30616"/>
        <dbReference type="ChEBI" id="CHEBI:43474"/>
        <dbReference type="ChEBI" id="CHEBI:456216"/>
        <dbReference type="EC" id="3.6.4.13"/>
    </reaction>
</comment>
<comment type="subunit">
    <text evidence="1">Interacts with the SSU processome.</text>
</comment>
<comment type="subcellular location">
    <subcellularLocation>
        <location evidence="5">Nucleus</location>
    </subcellularLocation>
</comment>
<comment type="domain">
    <text evidence="5">The Q motif is unique to and characteristic of the DEAD box family of RNA helicases and controls ATP binding and hydrolysis.</text>
</comment>
<comment type="similarity">
    <text evidence="5">Belongs to the DEAD box helicase family. DDX47/RRP3 subfamily.</text>
</comment>
<feature type="chain" id="PRO_0000232272" description="ATP-dependent rRNA helicase RRP3">
    <location>
        <begin position="1"/>
        <end position="484"/>
    </location>
</feature>
<feature type="domain" description="Helicase ATP-binding" evidence="2">
    <location>
        <begin position="69"/>
        <end position="240"/>
    </location>
</feature>
<feature type="domain" description="Helicase C-terminal" evidence="3">
    <location>
        <begin position="263"/>
        <end position="411"/>
    </location>
</feature>
<feature type="region of interest" description="Disordered" evidence="4">
    <location>
        <begin position="1"/>
        <end position="38"/>
    </location>
</feature>
<feature type="region of interest" description="Disordered" evidence="4">
    <location>
        <begin position="425"/>
        <end position="484"/>
    </location>
</feature>
<feature type="short sequence motif" description="Q motif" evidence="5">
    <location>
        <begin position="38"/>
        <end position="66"/>
    </location>
</feature>
<feature type="short sequence motif" description="DEAD box" evidence="5">
    <location>
        <begin position="188"/>
        <end position="191"/>
    </location>
</feature>
<feature type="compositionally biased region" description="Low complexity" evidence="4">
    <location>
        <begin position="1"/>
        <end position="14"/>
    </location>
</feature>
<feature type="compositionally biased region" description="Low complexity" evidence="4">
    <location>
        <begin position="22"/>
        <end position="34"/>
    </location>
</feature>
<feature type="compositionally biased region" description="Basic residues" evidence="4">
    <location>
        <begin position="439"/>
        <end position="448"/>
    </location>
</feature>
<feature type="compositionally biased region" description="Basic residues" evidence="4">
    <location>
        <begin position="468"/>
        <end position="484"/>
    </location>
</feature>
<feature type="binding site" evidence="2">
    <location>
        <begin position="82"/>
        <end position="89"/>
    </location>
    <ligand>
        <name>ATP</name>
        <dbReference type="ChEBI" id="CHEBI:30616"/>
    </ligand>
</feature>
<proteinExistence type="inferred from homology"/>
<dbReference type="EC" id="3.6.4.13" evidence="1"/>
<dbReference type="EMBL" id="AE017349">
    <property type="protein sequence ID" value="AAW45582.1"/>
    <property type="molecule type" value="Genomic_DNA"/>
</dbReference>
<dbReference type="RefSeq" id="XP_572889.1">
    <property type="nucleotide sequence ID" value="XM_572889.1"/>
</dbReference>
<dbReference type="SMR" id="P0CR00"/>
<dbReference type="FunCoup" id="P0CR00">
    <property type="interactions" value="759"/>
</dbReference>
<dbReference type="STRING" id="214684.P0CR00"/>
<dbReference type="PaxDb" id="214684-P0CR00"/>
<dbReference type="EnsemblFungi" id="AAW45582">
    <property type="protein sequence ID" value="AAW45582"/>
    <property type="gene ID" value="CNI02850"/>
</dbReference>
<dbReference type="GeneID" id="3259789"/>
<dbReference type="KEGG" id="cne:CNI02850"/>
<dbReference type="VEuPathDB" id="FungiDB:CNI02850"/>
<dbReference type="eggNOG" id="KOG0330">
    <property type="taxonomic scope" value="Eukaryota"/>
</dbReference>
<dbReference type="HOGENOM" id="CLU_003041_1_1_1"/>
<dbReference type="InParanoid" id="P0CR00"/>
<dbReference type="OMA" id="GIGIKCC"/>
<dbReference type="OrthoDB" id="10261904at2759"/>
<dbReference type="Proteomes" id="UP000002149">
    <property type="component" value="Chromosome 9"/>
</dbReference>
<dbReference type="GO" id="GO:0005730">
    <property type="term" value="C:nucleolus"/>
    <property type="evidence" value="ECO:0007669"/>
    <property type="project" value="EnsemblFungi"/>
</dbReference>
<dbReference type="GO" id="GO:0005634">
    <property type="term" value="C:nucleus"/>
    <property type="evidence" value="ECO:0000318"/>
    <property type="project" value="GO_Central"/>
</dbReference>
<dbReference type="GO" id="GO:0032040">
    <property type="term" value="C:small-subunit processome"/>
    <property type="evidence" value="ECO:0007669"/>
    <property type="project" value="EnsemblFungi"/>
</dbReference>
<dbReference type="GO" id="GO:0005524">
    <property type="term" value="F:ATP binding"/>
    <property type="evidence" value="ECO:0007669"/>
    <property type="project" value="UniProtKB-KW"/>
</dbReference>
<dbReference type="GO" id="GO:0016887">
    <property type="term" value="F:ATP hydrolysis activity"/>
    <property type="evidence" value="ECO:0007669"/>
    <property type="project" value="RHEA"/>
</dbReference>
<dbReference type="GO" id="GO:0003723">
    <property type="term" value="F:RNA binding"/>
    <property type="evidence" value="ECO:0007669"/>
    <property type="project" value="UniProtKB-KW"/>
</dbReference>
<dbReference type="GO" id="GO:0003724">
    <property type="term" value="F:RNA helicase activity"/>
    <property type="evidence" value="ECO:0007669"/>
    <property type="project" value="UniProtKB-EC"/>
</dbReference>
<dbReference type="GO" id="GO:0000462">
    <property type="term" value="P:maturation of SSU-rRNA from tricistronic rRNA transcript (SSU-rRNA, 5.8S rRNA, LSU-rRNA)"/>
    <property type="evidence" value="ECO:0007669"/>
    <property type="project" value="EnsemblFungi"/>
</dbReference>
<dbReference type="GO" id="GO:0006364">
    <property type="term" value="P:rRNA processing"/>
    <property type="evidence" value="ECO:0000318"/>
    <property type="project" value="GO_Central"/>
</dbReference>
<dbReference type="CDD" id="cd17954">
    <property type="entry name" value="DEADc_DDX47"/>
    <property type="match status" value="1"/>
</dbReference>
<dbReference type="CDD" id="cd18787">
    <property type="entry name" value="SF2_C_DEAD"/>
    <property type="match status" value="1"/>
</dbReference>
<dbReference type="Gene3D" id="3.40.50.300">
    <property type="entry name" value="P-loop containing nucleotide triphosphate hydrolases"/>
    <property type="match status" value="2"/>
</dbReference>
<dbReference type="InterPro" id="IPR044765">
    <property type="entry name" value="DDX47/Rrp3_DEADc"/>
</dbReference>
<dbReference type="InterPro" id="IPR011545">
    <property type="entry name" value="DEAD/DEAH_box_helicase_dom"/>
</dbReference>
<dbReference type="InterPro" id="IPR050079">
    <property type="entry name" value="DEAD_box_RNA_helicase"/>
</dbReference>
<dbReference type="InterPro" id="IPR014001">
    <property type="entry name" value="Helicase_ATP-bd"/>
</dbReference>
<dbReference type="InterPro" id="IPR001650">
    <property type="entry name" value="Helicase_C-like"/>
</dbReference>
<dbReference type="InterPro" id="IPR027417">
    <property type="entry name" value="P-loop_NTPase"/>
</dbReference>
<dbReference type="InterPro" id="IPR000629">
    <property type="entry name" value="RNA-helicase_DEAD-box_CS"/>
</dbReference>
<dbReference type="InterPro" id="IPR014014">
    <property type="entry name" value="RNA_helicase_DEAD_Q_motif"/>
</dbReference>
<dbReference type="PANTHER" id="PTHR47959:SF24">
    <property type="entry name" value="ATP-DEPENDENT RNA HELICASE"/>
    <property type="match status" value="1"/>
</dbReference>
<dbReference type="PANTHER" id="PTHR47959">
    <property type="entry name" value="ATP-DEPENDENT RNA HELICASE RHLE-RELATED"/>
    <property type="match status" value="1"/>
</dbReference>
<dbReference type="Pfam" id="PF00270">
    <property type="entry name" value="DEAD"/>
    <property type="match status" value="1"/>
</dbReference>
<dbReference type="Pfam" id="PF00271">
    <property type="entry name" value="Helicase_C"/>
    <property type="match status" value="1"/>
</dbReference>
<dbReference type="SMART" id="SM00487">
    <property type="entry name" value="DEXDc"/>
    <property type="match status" value="1"/>
</dbReference>
<dbReference type="SMART" id="SM00490">
    <property type="entry name" value="HELICc"/>
    <property type="match status" value="1"/>
</dbReference>
<dbReference type="SUPFAM" id="SSF52540">
    <property type="entry name" value="P-loop containing nucleoside triphosphate hydrolases"/>
    <property type="match status" value="1"/>
</dbReference>
<dbReference type="PROSITE" id="PS00039">
    <property type="entry name" value="DEAD_ATP_HELICASE"/>
    <property type="match status" value="1"/>
</dbReference>
<dbReference type="PROSITE" id="PS51192">
    <property type="entry name" value="HELICASE_ATP_BIND_1"/>
    <property type="match status" value="1"/>
</dbReference>
<dbReference type="PROSITE" id="PS51194">
    <property type="entry name" value="HELICASE_CTER"/>
    <property type="match status" value="1"/>
</dbReference>
<dbReference type="PROSITE" id="PS51195">
    <property type="entry name" value="Q_MOTIF"/>
    <property type="match status" value="1"/>
</dbReference>
<organism>
    <name type="scientific">Cryptococcus neoformans var. neoformans serotype D (strain JEC21 / ATCC MYA-565)</name>
    <name type="common">Filobasidiella neoformans</name>
    <dbReference type="NCBI Taxonomy" id="214684"/>
    <lineage>
        <taxon>Eukaryota</taxon>
        <taxon>Fungi</taxon>
        <taxon>Dikarya</taxon>
        <taxon>Basidiomycota</taxon>
        <taxon>Agaricomycotina</taxon>
        <taxon>Tremellomycetes</taxon>
        <taxon>Tremellales</taxon>
        <taxon>Cryptococcaceae</taxon>
        <taxon>Cryptococcus</taxon>
        <taxon>Cryptococcus neoformans species complex</taxon>
    </lineage>
</organism>
<protein>
    <recommendedName>
        <fullName evidence="5">ATP-dependent rRNA helicase RRP3</fullName>
        <ecNumber evidence="1">3.6.4.13</ecNumber>
    </recommendedName>
</protein>
<name>RRP3_CRYNJ</name>
<accession>P0CR00</accession>
<accession>Q55N12</accession>
<accession>Q5KBE2</accession>
<gene>
    <name evidence="1" type="primary">RRP3</name>
    <name type="ordered locus">CNI02850</name>
</gene>
<reference key="1">
    <citation type="journal article" date="2005" name="Science">
        <title>The genome of the basidiomycetous yeast and human pathogen Cryptococcus neoformans.</title>
        <authorList>
            <person name="Loftus B.J."/>
            <person name="Fung E."/>
            <person name="Roncaglia P."/>
            <person name="Rowley D."/>
            <person name="Amedeo P."/>
            <person name="Bruno D."/>
            <person name="Vamathevan J."/>
            <person name="Miranda M."/>
            <person name="Anderson I.J."/>
            <person name="Fraser J.A."/>
            <person name="Allen J.E."/>
            <person name="Bosdet I.E."/>
            <person name="Brent M.R."/>
            <person name="Chiu R."/>
            <person name="Doering T.L."/>
            <person name="Donlin M.J."/>
            <person name="D'Souza C.A."/>
            <person name="Fox D.S."/>
            <person name="Grinberg V."/>
            <person name="Fu J."/>
            <person name="Fukushima M."/>
            <person name="Haas B.J."/>
            <person name="Huang J.C."/>
            <person name="Janbon G."/>
            <person name="Jones S.J.M."/>
            <person name="Koo H.L."/>
            <person name="Krzywinski M.I."/>
            <person name="Kwon-Chung K.J."/>
            <person name="Lengeler K.B."/>
            <person name="Maiti R."/>
            <person name="Marra M.A."/>
            <person name="Marra R.E."/>
            <person name="Mathewson C.A."/>
            <person name="Mitchell T.G."/>
            <person name="Pertea M."/>
            <person name="Riggs F.R."/>
            <person name="Salzberg S.L."/>
            <person name="Schein J.E."/>
            <person name="Shvartsbeyn A."/>
            <person name="Shin H."/>
            <person name="Shumway M."/>
            <person name="Specht C.A."/>
            <person name="Suh B.B."/>
            <person name="Tenney A."/>
            <person name="Utterback T.R."/>
            <person name="Wickes B.L."/>
            <person name="Wortman J.R."/>
            <person name="Wye N.H."/>
            <person name="Kronstad J.W."/>
            <person name="Lodge J.K."/>
            <person name="Heitman J."/>
            <person name="Davis R.W."/>
            <person name="Fraser C.M."/>
            <person name="Hyman R.W."/>
        </authorList>
    </citation>
    <scope>NUCLEOTIDE SEQUENCE [LARGE SCALE GENOMIC DNA]</scope>
    <source>
        <strain>JEC21 / ATCC MYA-565</strain>
    </source>
</reference>
<evidence type="ECO:0000250" key="1">
    <source>
        <dbReference type="UniProtKB" id="P38712"/>
    </source>
</evidence>
<evidence type="ECO:0000255" key="2">
    <source>
        <dbReference type="PROSITE-ProRule" id="PRU00541"/>
    </source>
</evidence>
<evidence type="ECO:0000255" key="3">
    <source>
        <dbReference type="PROSITE-ProRule" id="PRU00542"/>
    </source>
</evidence>
<evidence type="ECO:0000256" key="4">
    <source>
        <dbReference type="SAM" id="MobiDB-lite"/>
    </source>
</evidence>
<evidence type="ECO:0000305" key="5"/>
<sequence length="484" mass="52563">MPSPSPEASSSMSQPGPPSRSPSPASSNPDAPEASHNKTFADLGISPELCRACASMGFKKPSDIQAEAIPHALEGKDIIGLAQTGSGKTAAFSLPILQTLWENPQPFFALVLAPTRELAYQISQQVTSLGSGIGVRTAVLVGGMDMMSQSIALSKRPHIIVATPGRLMDHLENTKGFSLKSLKYLVMDEADRLLDLDFGPIIDKILKVIPKERNTYLFSATMTTKVAKLQRASLNKPVRVEVSSKYSTVSTLLQHYLLLPLKNKDAYLLYLANELSSSSMMIFTRTVADSQRLSIILRRLGFPAIPLHGQMTQSLRLASLNKFKSGGRSILVATDVASRGLDIPLVDLVINYDMPTNSKDYVHRVGRTARAGRSGKSITLVTQYDVEILQRIESHIGKKMTSFDVDKEAVALLTDTVAKANREAALEMRESGTGGGGGKRGRDKGKRKTFGDGDDRDRDDDVVEAGVPRKKNKFTPGGKKKARK</sequence>